<evidence type="ECO:0000256" key="1">
    <source>
        <dbReference type="SAM" id="MobiDB-lite"/>
    </source>
</evidence>
<evidence type="ECO:0000305" key="2"/>
<sequence length="58" mass="7979">AGSYYSYRRRRCSPRRLYRLRRRRYRSSRRRRRRPCRRRRHRRVCRRVRRRRRCCRRR</sequence>
<organism>
    <name type="scientific">Equus caballus</name>
    <name type="common">Horse</name>
    <dbReference type="NCBI Taxonomy" id="9796"/>
    <lineage>
        <taxon>Eukaryota</taxon>
        <taxon>Metazoa</taxon>
        <taxon>Chordata</taxon>
        <taxon>Craniata</taxon>
        <taxon>Vertebrata</taxon>
        <taxon>Euteleostomi</taxon>
        <taxon>Mammalia</taxon>
        <taxon>Eutheria</taxon>
        <taxon>Laurasiatheria</taxon>
        <taxon>Perissodactyla</taxon>
        <taxon>Equidae</taxon>
        <taxon>Equus</taxon>
    </lineage>
</organism>
<name>HSP3_HORSE</name>
<proteinExistence type="evidence at protein level"/>
<protein>
    <recommendedName>
        <fullName>Sperm histone P2b</fullName>
    </recommendedName>
    <alternativeName>
        <fullName>Protamine 2b</fullName>
    </alternativeName>
    <alternativeName>
        <fullName>ST2b</fullName>
    </alternativeName>
</protein>
<comment type="function">
    <text>Protamines substitute for histones in the chromatin of sperm during the haploid phase of spermatogenesis. They compact sperm DNA into a highly condensed, stable and inactive complex.</text>
</comment>
<comment type="subcellular location">
    <subcellularLocation>
        <location>Nucleus</location>
    </subcellularLocation>
    <subcellularLocation>
        <location>Chromosome</location>
    </subcellularLocation>
</comment>
<comment type="tissue specificity">
    <text>Testis.</text>
</comment>
<comment type="similarity">
    <text evidence="2">Belongs to the protamine P2 family.</text>
</comment>
<accession>P15343</accession>
<keyword id="KW-0158">Chromosome</keyword>
<keyword id="KW-0217">Developmental protein</keyword>
<keyword id="KW-0221">Differentiation</keyword>
<keyword id="KW-0903">Direct protein sequencing</keyword>
<keyword id="KW-0226">DNA condensation</keyword>
<keyword id="KW-0238">DNA-binding</keyword>
<keyword id="KW-0544">Nucleosome core</keyword>
<keyword id="KW-0539">Nucleus</keyword>
<keyword id="KW-1185">Reference proteome</keyword>
<keyword id="KW-0744">Spermatogenesis</keyword>
<feature type="chain" id="PRO_0000191597" description="Sperm histone P2b">
    <location>
        <begin position="1"/>
        <end position="58"/>
    </location>
</feature>
<feature type="region of interest" description="Disordered" evidence="1">
    <location>
        <begin position="20"/>
        <end position="41"/>
    </location>
</feature>
<dbReference type="PIR" id="S10755">
    <property type="entry name" value="S10755"/>
</dbReference>
<dbReference type="STRING" id="9796.ENSECAP00000043831"/>
<dbReference type="PaxDb" id="9796-ENSECAP00000043831"/>
<dbReference type="InParanoid" id="P15343"/>
<dbReference type="Proteomes" id="UP000002281">
    <property type="component" value="Unplaced"/>
</dbReference>
<dbReference type="GO" id="GO:0000786">
    <property type="term" value="C:nucleosome"/>
    <property type="evidence" value="ECO:0007669"/>
    <property type="project" value="UniProtKB-KW"/>
</dbReference>
<dbReference type="GO" id="GO:0005634">
    <property type="term" value="C:nucleus"/>
    <property type="evidence" value="ECO:0007669"/>
    <property type="project" value="UniProtKB-SubCell"/>
</dbReference>
<dbReference type="GO" id="GO:0003677">
    <property type="term" value="F:DNA binding"/>
    <property type="evidence" value="ECO:0007669"/>
    <property type="project" value="UniProtKB-KW"/>
</dbReference>
<dbReference type="GO" id="GO:0030154">
    <property type="term" value="P:cell differentiation"/>
    <property type="evidence" value="ECO:0007669"/>
    <property type="project" value="UniProtKB-KW"/>
</dbReference>
<dbReference type="GO" id="GO:0030261">
    <property type="term" value="P:chromosome condensation"/>
    <property type="evidence" value="ECO:0007669"/>
    <property type="project" value="UniProtKB-KW"/>
</dbReference>
<dbReference type="GO" id="GO:0007283">
    <property type="term" value="P:spermatogenesis"/>
    <property type="evidence" value="ECO:0007669"/>
    <property type="project" value="UniProtKB-KW"/>
</dbReference>
<reference key="1">
    <citation type="journal article" date="1990" name="Biochim. Biophys. Acta">
        <title>Primary structures of two protamine 2 variants (St2a and St2b) from stallion spermatozoa.</title>
        <authorList>
            <person name="Pirhonen A."/>
            <person name="Valtonen P."/>
            <person name="Linnala-Kankkunen A."/>
            <person name="Heiskanen M.-L."/>
            <person name="Maenpaa P.K."/>
        </authorList>
    </citation>
    <scope>PROTEIN SEQUENCE</scope>
</reference>
<reference key="2">
    <citation type="journal article" date="1989" name="FEBS Lett.">
        <title>Comparison of partial amino acid sequences of two protamine 2 variants from stallion sperm. Structural evidence that the variants are products of different genes.</title>
        <authorList>
            <person name="Pirhonen A."/>
            <person name="Linnala-Kankkunen A."/>
            <person name="Maenpaa P.K."/>
        </authorList>
    </citation>
    <scope>PROTEIN SEQUENCE OF 1-25</scope>
</reference>